<accession>D4A3U0</accession>
<name>GPR22_RAT</name>
<comment type="function">
    <text evidence="1 2">Orphan G-protein coupled receptor. Seems to act through a G(i)/G(o) mediated pathway (By similarity). May be involved in ciliogenesis (By similarity).</text>
</comment>
<comment type="subcellular location">
    <subcellularLocation>
        <location evidence="5">Cell membrane</location>
        <topology evidence="3">Multi-pass membrane protein</topology>
    </subcellularLocation>
</comment>
<comment type="tissue specificity">
    <text evidence="5">Abundant levels detected in the brain (PubMed:18539757). High expression in the heart (at protein level) (PubMed:18539757). No detectable expression in other peripheral tissues (PubMed:18539757).</text>
</comment>
<comment type="similarity">
    <text evidence="4">Belongs to the G-protein coupled receptor 1 family.</text>
</comment>
<comment type="sequence caution" evidence="6">
    <conflict type="erroneous initiation">
        <sequence resource="EMBL-CDS" id="EDM03260"/>
    </conflict>
    <text>Extended N-terminus.</text>
</comment>
<organism>
    <name type="scientific">Rattus norvegicus</name>
    <name type="common">Rat</name>
    <dbReference type="NCBI Taxonomy" id="10116"/>
    <lineage>
        <taxon>Eukaryota</taxon>
        <taxon>Metazoa</taxon>
        <taxon>Chordata</taxon>
        <taxon>Craniata</taxon>
        <taxon>Vertebrata</taxon>
        <taxon>Euteleostomi</taxon>
        <taxon>Mammalia</taxon>
        <taxon>Eutheria</taxon>
        <taxon>Euarchontoglires</taxon>
        <taxon>Glires</taxon>
        <taxon>Rodentia</taxon>
        <taxon>Myomorpha</taxon>
        <taxon>Muroidea</taxon>
        <taxon>Muridae</taxon>
        <taxon>Murinae</taxon>
        <taxon>Rattus</taxon>
    </lineage>
</organism>
<gene>
    <name evidence="7" type="primary">Gpr22</name>
</gene>
<dbReference type="EMBL" id="AABR07063821">
    <property type="status" value="NOT_ANNOTATED_CDS"/>
    <property type="molecule type" value="Genomic_DNA"/>
</dbReference>
<dbReference type="EMBL" id="CH473947">
    <property type="protein sequence ID" value="EDM03260.1"/>
    <property type="status" value="ALT_INIT"/>
    <property type="molecule type" value="Genomic_DNA"/>
</dbReference>
<dbReference type="RefSeq" id="NP_001100192.1">
    <property type="nucleotide sequence ID" value="NM_001106722.1"/>
</dbReference>
<dbReference type="RefSeq" id="XP_017449568.1">
    <property type="nucleotide sequence ID" value="XM_017594079.1"/>
</dbReference>
<dbReference type="SMR" id="D4A3U0"/>
<dbReference type="FunCoup" id="D4A3U0">
    <property type="interactions" value="149"/>
</dbReference>
<dbReference type="STRING" id="10116.ENSRNOP00000072608"/>
<dbReference type="PhosphoSitePlus" id="D4A3U0"/>
<dbReference type="PaxDb" id="10116-ENSRNOP00000011659"/>
<dbReference type="GeneID" id="298944"/>
<dbReference type="KEGG" id="rno:298944"/>
<dbReference type="UCSC" id="RGD:1310848">
    <property type="organism name" value="rat"/>
</dbReference>
<dbReference type="AGR" id="RGD:1310848"/>
<dbReference type="CTD" id="2845"/>
<dbReference type="RGD" id="1310848">
    <property type="gene designation" value="Gpr22"/>
</dbReference>
<dbReference type="eggNOG" id="KOG3656">
    <property type="taxonomic scope" value="Eukaryota"/>
</dbReference>
<dbReference type="InParanoid" id="D4A3U0"/>
<dbReference type="OrthoDB" id="6156007at2759"/>
<dbReference type="PhylomeDB" id="D4A3U0"/>
<dbReference type="TreeFam" id="TF318505"/>
<dbReference type="PRO" id="PR:D4A3U0"/>
<dbReference type="Proteomes" id="UP000002494">
    <property type="component" value="Unplaced"/>
</dbReference>
<dbReference type="Proteomes" id="UP000234681">
    <property type="component" value="Chromosome 6"/>
</dbReference>
<dbReference type="GO" id="GO:0005886">
    <property type="term" value="C:plasma membrane"/>
    <property type="evidence" value="ECO:0000314"/>
    <property type="project" value="UniProtKB"/>
</dbReference>
<dbReference type="GO" id="GO:0004930">
    <property type="term" value="F:G protein-coupled receptor activity"/>
    <property type="evidence" value="ECO:0000250"/>
    <property type="project" value="UniProtKB"/>
</dbReference>
<dbReference type="GO" id="GO:0030030">
    <property type="term" value="P:cell projection organization"/>
    <property type="evidence" value="ECO:0007669"/>
    <property type="project" value="UniProtKB-KW"/>
</dbReference>
<dbReference type="GO" id="GO:0032870">
    <property type="term" value="P:cellular response to hormone stimulus"/>
    <property type="evidence" value="ECO:0000318"/>
    <property type="project" value="GO_Central"/>
</dbReference>
<dbReference type="GO" id="GO:0007186">
    <property type="term" value="P:G protein-coupled receptor signaling pathway"/>
    <property type="evidence" value="ECO:0000318"/>
    <property type="project" value="GO_Central"/>
</dbReference>
<dbReference type="CDD" id="cd00637">
    <property type="entry name" value="7tm_classA_rhodopsin-like"/>
    <property type="match status" value="1"/>
</dbReference>
<dbReference type="FunFam" id="1.20.1070.10:FF:000084">
    <property type="entry name" value="Probable G-protein coupled receptor 22"/>
    <property type="match status" value="1"/>
</dbReference>
<dbReference type="FunFam" id="1.20.1070.10:FF:000116">
    <property type="entry name" value="probable G-protein coupled receptor 22"/>
    <property type="match status" value="1"/>
</dbReference>
<dbReference type="Gene3D" id="1.20.1070.10">
    <property type="entry name" value="Rhodopsin 7-helix transmembrane proteins"/>
    <property type="match status" value="2"/>
</dbReference>
<dbReference type="InterPro" id="IPR000276">
    <property type="entry name" value="GPCR_Rhodpsn"/>
</dbReference>
<dbReference type="InterPro" id="IPR017452">
    <property type="entry name" value="GPCR_Rhodpsn_7TM"/>
</dbReference>
<dbReference type="PANTHER" id="PTHR24241:SF1">
    <property type="entry name" value="G-PROTEIN COUPLED RECEPTOR 22"/>
    <property type="match status" value="1"/>
</dbReference>
<dbReference type="PANTHER" id="PTHR24241">
    <property type="entry name" value="NEUROPEPTIDE RECEPTOR-RELATED G-PROTEIN COUPLED RECEPTOR"/>
    <property type="match status" value="1"/>
</dbReference>
<dbReference type="Pfam" id="PF00001">
    <property type="entry name" value="7tm_1"/>
    <property type="match status" value="1"/>
</dbReference>
<dbReference type="PRINTS" id="PR00237">
    <property type="entry name" value="GPCRRHODOPSN"/>
</dbReference>
<dbReference type="SUPFAM" id="SSF81321">
    <property type="entry name" value="Family A G protein-coupled receptor-like"/>
    <property type="match status" value="2"/>
</dbReference>
<dbReference type="PROSITE" id="PS50262">
    <property type="entry name" value="G_PROTEIN_RECEP_F1_2"/>
    <property type="match status" value="1"/>
</dbReference>
<feature type="chain" id="PRO_0000445472" description="G-protein coupled receptor 22">
    <location>
        <begin position="1"/>
        <end position="432"/>
    </location>
</feature>
<feature type="topological domain" description="Cytoplasmic" evidence="6">
    <location>
        <begin position="1"/>
        <end position="45"/>
    </location>
</feature>
<feature type="transmembrane region" description="Helical; Name=1" evidence="3">
    <location>
        <begin position="46"/>
        <end position="66"/>
    </location>
</feature>
<feature type="topological domain" description="Extracellular" evidence="6">
    <location>
        <begin position="67"/>
        <end position="85"/>
    </location>
</feature>
<feature type="transmembrane region" description="Helical; Name=2" evidence="3">
    <location>
        <begin position="86"/>
        <end position="106"/>
    </location>
</feature>
<feature type="topological domain" description="Cytoplasmic" evidence="6">
    <location>
        <begin position="107"/>
        <end position="115"/>
    </location>
</feature>
<feature type="transmembrane region" description="Helical; Name=3" evidence="3">
    <location>
        <begin position="116"/>
        <end position="136"/>
    </location>
</feature>
<feature type="topological domain" description="Extracellular" evidence="6">
    <location>
        <begin position="137"/>
        <end position="156"/>
    </location>
</feature>
<feature type="transmembrane region" description="Helical; Name=4" evidence="3">
    <location>
        <begin position="157"/>
        <end position="177"/>
    </location>
</feature>
<feature type="topological domain" description="Cytoplasmic" evidence="6">
    <location>
        <begin position="178"/>
        <end position="208"/>
    </location>
</feature>
<feature type="transmembrane region" description="Helical; Name=5" evidence="3">
    <location>
        <begin position="209"/>
        <end position="229"/>
    </location>
</feature>
<feature type="topological domain" description="Extracellular" evidence="6">
    <location>
        <begin position="230"/>
        <end position="314"/>
    </location>
</feature>
<feature type="transmembrane region" description="Helical; Name=6" evidence="3">
    <location>
        <begin position="315"/>
        <end position="335"/>
    </location>
</feature>
<feature type="topological domain" description="Cytoplasmic" evidence="6">
    <location>
        <begin position="336"/>
        <end position="348"/>
    </location>
</feature>
<feature type="transmembrane region" description="Helical; Name=7" evidence="3">
    <location>
        <begin position="349"/>
        <end position="369"/>
    </location>
</feature>
<feature type="topological domain" description="Extracellular" evidence="6">
    <location>
        <begin position="370"/>
        <end position="432"/>
    </location>
</feature>
<reference key="1">
    <citation type="journal article" date="2004" name="Nature">
        <title>Genome sequence of the Brown Norway rat yields insights into mammalian evolution.</title>
        <authorList>
            <person name="Gibbs R.A."/>
            <person name="Weinstock G.M."/>
            <person name="Metzker M.L."/>
            <person name="Muzny D.M."/>
            <person name="Sodergren E.J."/>
            <person name="Scherer S."/>
            <person name="Scott G."/>
            <person name="Steffen D."/>
            <person name="Worley K.C."/>
            <person name="Burch P.E."/>
            <person name="Okwuonu G."/>
            <person name="Hines S."/>
            <person name="Lewis L."/>
            <person name="Deramo C."/>
            <person name="Delgado O."/>
            <person name="Dugan-Rocha S."/>
            <person name="Miner G."/>
            <person name="Morgan M."/>
            <person name="Hawes A."/>
            <person name="Gill R."/>
            <person name="Holt R.A."/>
            <person name="Adams M.D."/>
            <person name="Amanatides P.G."/>
            <person name="Baden-Tillson H."/>
            <person name="Barnstead M."/>
            <person name="Chin S."/>
            <person name="Evans C.A."/>
            <person name="Ferriera S."/>
            <person name="Fosler C."/>
            <person name="Glodek A."/>
            <person name="Gu Z."/>
            <person name="Jennings D."/>
            <person name="Kraft C.L."/>
            <person name="Nguyen T."/>
            <person name="Pfannkoch C.M."/>
            <person name="Sitter C."/>
            <person name="Sutton G.G."/>
            <person name="Venter J.C."/>
            <person name="Woodage T."/>
            <person name="Smith D."/>
            <person name="Lee H.-M."/>
            <person name="Gustafson E."/>
            <person name="Cahill P."/>
            <person name="Kana A."/>
            <person name="Doucette-Stamm L."/>
            <person name="Weinstock K."/>
            <person name="Fechtel K."/>
            <person name="Weiss R.B."/>
            <person name="Dunn D.M."/>
            <person name="Green E.D."/>
            <person name="Blakesley R.W."/>
            <person name="Bouffard G.G."/>
            <person name="De Jong P.J."/>
            <person name="Osoegawa K."/>
            <person name="Zhu B."/>
            <person name="Marra M."/>
            <person name="Schein J."/>
            <person name="Bosdet I."/>
            <person name="Fjell C."/>
            <person name="Jones S."/>
            <person name="Krzywinski M."/>
            <person name="Mathewson C."/>
            <person name="Siddiqui A."/>
            <person name="Wye N."/>
            <person name="McPherson J."/>
            <person name="Zhao S."/>
            <person name="Fraser C.M."/>
            <person name="Shetty J."/>
            <person name="Shatsman S."/>
            <person name="Geer K."/>
            <person name="Chen Y."/>
            <person name="Abramzon S."/>
            <person name="Nierman W.C."/>
            <person name="Havlak P.H."/>
            <person name="Chen R."/>
            <person name="Durbin K.J."/>
            <person name="Egan A."/>
            <person name="Ren Y."/>
            <person name="Song X.-Z."/>
            <person name="Li B."/>
            <person name="Liu Y."/>
            <person name="Qin X."/>
            <person name="Cawley S."/>
            <person name="Cooney A.J."/>
            <person name="D'Souza L.M."/>
            <person name="Martin K."/>
            <person name="Wu J.Q."/>
            <person name="Gonzalez-Garay M.L."/>
            <person name="Jackson A.R."/>
            <person name="Kalafus K.J."/>
            <person name="McLeod M.P."/>
            <person name="Milosavljevic A."/>
            <person name="Virk D."/>
            <person name="Volkov A."/>
            <person name="Wheeler D.A."/>
            <person name="Zhang Z."/>
            <person name="Bailey J.A."/>
            <person name="Eichler E.E."/>
            <person name="Tuzun E."/>
            <person name="Birney E."/>
            <person name="Mongin E."/>
            <person name="Ureta-Vidal A."/>
            <person name="Woodwark C."/>
            <person name="Zdobnov E."/>
            <person name="Bork P."/>
            <person name="Suyama M."/>
            <person name="Torrents D."/>
            <person name="Alexandersson M."/>
            <person name="Trask B.J."/>
            <person name="Young J.M."/>
            <person name="Huang H."/>
            <person name="Wang H."/>
            <person name="Xing H."/>
            <person name="Daniels S."/>
            <person name="Gietzen D."/>
            <person name="Schmidt J."/>
            <person name="Stevens K."/>
            <person name="Vitt U."/>
            <person name="Wingrove J."/>
            <person name="Camara F."/>
            <person name="Mar Alba M."/>
            <person name="Abril J.F."/>
            <person name="Guigo R."/>
            <person name="Smit A."/>
            <person name="Dubchak I."/>
            <person name="Rubin E.M."/>
            <person name="Couronne O."/>
            <person name="Poliakov A."/>
            <person name="Huebner N."/>
            <person name="Ganten D."/>
            <person name="Goesele C."/>
            <person name="Hummel O."/>
            <person name="Kreitler T."/>
            <person name="Lee Y.-A."/>
            <person name="Monti J."/>
            <person name="Schulz H."/>
            <person name="Zimdahl H."/>
            <person name="Himmelbauer H."/>
            <person name="Lehrach H."/>
            <person name="Jacob H.J."/>
            <person name="Bromberg S."/>
            <person name="Gullings-Handley J."/>
            <person name="Jensen-Seaman M.I."/>
            <person name="Kwitek A.E."/>
            <person name="Lazar J."/>
            <person name="Pasko D."/>
            <person name="Tonellato P.J."/>
            <person name="Twigger S."/>
            <person name="Ponting C.P."/>
            <person name="Duarte J.M."/>
            <person name="Rice S."/>
            <person name="Goodstadt L."/>
            <person name="Beatson S.A."/>
            <person name="Emes R.D."/>
            <person name="Winter E.E."/>
            <person name="Webber C."/>
            <person name="Brandt P."/>
            <person name="Nyakatura G."/>
            <person name="Adetobi M."/>
            <person name="Chiaromonte F."/>
            <person name="Elnitski L."/>
            <person name="Eswara P."/>
            <person name="Hardison R.C."/>
            <person name="Hou M."/>
            <person name="Kolbe D."/>
            <person name="Makova K."/>
            <person name="Miller W."/>
            <person name="Nekrutenko A."/>
            <person name="Riemer C."/>
            <person name="Schwartz S."/>
            <person name="Taylor J."/>
            <person name="Yang S."/>
            <person name="Zhang Y."/>
            <person name="Lindpaintner K."/>
            <person name="Andrews T.D."/>
            <person name="Caccamo M."/>
            <person name="Clamp M."/>
            <person name="Clarke L."/>
            <person name="Curwen V."/>
            <person name="Durbin R.M."/>
            <person name="Eyras E."/>
            <person name="Searle S.M."/>
            <person name="Cooper G.M."/>
            <person name="Batzoglou S."/>
            <person name="Brudno M."/>
            <person name="Sidow A."/>
            <person name="Stone E.A."/>
            <person name="Payseur B.A."/>
            <person name="Bourque G."/>
            <person name="Lopez-Otin C."/>
            <person name="Puente X.S."/>
            <person name="Chakrabarti K."/>
            <person name="Chatterji S."/>
            <person name="Dewey C."/>
            <person name="Pachter L."/>
            <person name="Bray N."/>
            <person name="Yap V.B."/>
            <person name="Caspi A."/>
            <person name="Tesler G."/>
            <person name="Pevzner P.A."/>
            <person name="Haussler D."/>
            <person name="Roskin K.M."/>
            <person name="Baertsch R."/>
            <person name="Clawson H."/>
            <person name="Furey T.S."/>
            <person name="Hinrichs A.S."/>
            <person name="Karolchik D."/>
            <person name="Kent W.J."/>
            <person name="Rosenbloom K.R."/>
            <person name="Trumbower H."/>
            <person name="Weirauch M."/>
            <person name="Cooper D.N."/>
            <person name="Stenson P.D."/>
            <person name="Ma B."/>
            <person name="Brent M."/>
            <person name="Arumugam M."/>
            <person name="Shteynberg D."/>
            <person name="Copley R.R."/>
            <person name="Taylor M.S."/>
            <person name="Riethman H."/>
            <person name="Mudunuri U."/>
            <person name="Peterson J."/>
            <person name="Guyer M."/>
            <person name="Felsenfeld A."/>
            <person name="Old S."/>
            <person name="Mockrin S."/>
            <person name="Collins F.S."/>
        </authorList>
    </citation>
    <scope>NUCLEOTIDE SEQUENCE [LARGE SCALE GENOMIC DNA]</scope>
    <source>
        <strain>Brown Norway</strain>
    </source>
</reference>
<reference key="2">
    <citation type="submission" date="2005-07" db="EMBL/GenBank/DDBJ databases">
        <authorList>
            <person name="Mural R.J."/>
            <person name="Adams M.D."/>
            <person name="Myers E.W."/>
            <person name="Smith H.O."/>
            <person name="Venter J.C."/>
        </authorList>
    </citation>
    <scope>NUCLEOTIDE SEQUENCE [LARGE SCALE GENOMIC DNA]</scope>
</reference>
<reference key="3">
    <citation type="journal article" date="2008" name="Am. J. Physiol.">
        <title>Myocardial expression, signaling, and function of GPR22: a protective role for an orphan G protein-coupled receptor.</title>
        <authorList>
            <person name="Adams J.W."/>
            <person name="Wang J."/>
            <person name="Davis J.R."/>
            <person name="Liaw C."/>
            <person name="Gaidarov I."/>
            <person name="Gatlin J."/>
            <person name="Dalton N.D."/>
            <person name="Gu Y."/>
            <person name="Ross J. Jr."/>
            <person name="Behan D."/>
            <person name="Chien K."/>
            <person name="Connolly D."/>
        </authorList>
    </citation>
    <scope>TISSUE SPECIFICITY</scope>
    <scope>SUBCELLULAR LOCATION</scope>
</reference>
<proteinExistence type="evidence at protein level"/>
<evidence type="ECO:0000250" key="1">
    <source>
        <dbReference type="UniProtKB" id="A0A2R9YJI3"/>
    </source>
</evidence>
<evidence type="ECO:0000250" key="2">
    <source>
        <dbReference type="UniProtKB" id="Q99680"/>
    </source>
</evidence>
<evidence type="ECO:0000255" key="3"/>
<evidence type="ECO:0000255" key="4">
    <source>
        <dbReference type="PROSITE-ProRule" id="PRU00521"/>
    </source>
</evidence>
<evidence type="ECO:0000269" key="5">
    <source>
    </source>
</evidence>
<evidence type="ECO:0000305" key="6"/>
<evidence type="ECO:0000312" key="7">
    <source>
        <dbReference type="RGD" id="1310848"/>
    </source>
</evidence>
<protein>
    <recommendedName>
        <fullName>G-protein coupled receptor 22</fullName>
    </recommendedName>
</protein>
<sequence length="432" mass="49133">MCFSPVLEINMQSESNVTVRDDIEDIDTNMYQPLSYPLSFQVSLTGFLMLEIVLGLGSNLTVLVLYCMKSNLISSVSNIITMNLHVLDVIICVGCIPLTIVILLLSLERNTALICCFHEACVSFASVSTAINVFAITLDRYDISVKPANRILTMGRAVMLMTSIWIFSFFSFLIPFIEVNFFSLQSGNAWENKTLLCVSTSEYYTELGMYYHLLVQIPIFFFTVIVMLITYTKILQALNIRIGTRFSTGQKKKARKKKTISLTTHETTDMSQSSGGRNVVFGVRTSVSVIIALRRAVKRHRERRERQKRVFKMSLLIISTFLLCWTPISVLNTTILCLGPSDLLVKLRLCFLVMAYGTTIFHPLLYAFTRQKFQKVLKSKMKKRVVSIVEADPMPNNAVIHNSWIDPKRNKKVTYEDSEIREKCLVPQVVTD</sequence>
<keyword id="KW-1003">Cell membrane</keyword>
<keyword id="KW-0970">Cilium biogenesis/degradation</keyword>
<keyword id="KW-0472">Membrane</keyword>
<keyword id="KW-0675">Receptor</keyword>
<keyword id="KW-1185">Reference proteome</keyword>
<keyword id="KW-0812">Transmembrane</keyword>
<keyword id="KW-1133">Transmembrane helix</keyword>